<protein>
    <recommendedName>
        <fullName evidence="1">Galactokinase</fullName>
        <ecNumber evidence="1">2.7.1.6</ecNumber>
    </recommendedName>
    <alternativeName>
        <fullName evidence="1">Galactose kinase</fullName>
    </alternativeName>
</protein>
<gene>
    <name evidence="1" type="primary">galK</name>
    <name type="ordered locus">Rv0620</name>
    <name type="ORF">MTCY19H5.01c</name>
    <name type="ORF">MTCY20H10.01</name>
</gene>
<feature type="chain" id="PRO_0000184619" description="Galactokinase">
    <location>
        <begin position="1"/>
        <end position="363"/>
    </location>
</feature>
<feature type="active site" description="Proton acceptor" evidence="1">
    <location>
        <position position="153"/>
    </location>
</feature>
<feature type="binding site" evidence="1">
    <location>
        <begin position="16"/>
        <end position="19"/>
    </location>
    <ligand>
        <name>substrate</name>
    </ligand>
</feature>
<feature type="binding site" evidence="1">
    <location>
        <position position="50"/>
    </location>
    <ligand>
        <name>ATP</name>
        <dbReference type="ChEBI" id="CHEBI:30616"/>
    </ligand>
</feature>
<feature type="binding site" evidence="1">
    <location>
        <begin position="103"/>
        <end position="109"/>
    </location>
    <ligand>
        <name>ATP</name>
        <dbReference type="ChEBI" id="CHEBI:30616"/>
    </ligand>
</feature>
<feature type="binding site" evidence="1">
    <location>
        <position position="109"/>
    </location>
    <ligand>
        <name>Mg(2+)</name>
        <dbReference type="ChEBI" id="CHEBI:18420"/>
    </ligand>
</feature>
<feature type="binding site" evidence="1">
    <location>
        <position position="141"/>
    </location>
    <ligand>
        <name>Mg(2+)</name>
        <dbReference type="ChEBI" id="CHEBI:18420"/>
    </ligand>
</feature>
<feature type="binding site" evidence="1">
    <location>
        <position position="205"/>
    </location>
    <ligand>
        <name>substrate</name>
    </ligand>
</feature>
<feature type="site" description="Transition state stabilizer" evidence="1">
    <location>
        <position position="10"/>
    </location>
</feature>
<sequence>MTVSYGAPGRVNLIGEHTDYNLGFALPIALPRRTVVTFTPEHTGAITARSDRADGSARIPLDTTPGQVTGWAAYAAGAIWALRGAGHPVPGGAMSITSDVEIGSGLSSSAALIGAVLGAVGAATGTRIDRLERARLAQRAENDYVGAPTGLLDHLAALFGAPKTALLIDFRDITVRPVAFDPDACDVVLLLMDSRARHCHAGGEYALRRASCERAAADLGVSSLRAVQDRGLAALGAIADPIDARRARHVLTENQRVLDFAAALADSDFTAAGQLLTASHESMREDFAITTERIDLIAESAVRAGALGARMTGGGFGGAVIALVPADRARDVADTVRRAAVTAGYDEPAVSRTYAAPGAAECR</sequence>
<dbReference type="EC" id="2.7.1.6" evidence="1"/>
<dbReference type="EMBL" id="AL123456">
    <property type="protein sequence ID" value="CCP43361.1"/>
    <property type="molecule type" value="Genomic_DNA"/>
</dbReference>
<dbReference type="PIR" id="G70911">
    <property type="entry name" value="G70911"/>
</dbReference>
<dbReference type="RefSeq" id="NP_215134.1">
    <property type="nucleotide sequence ID" value="NC_000962.3"/>
</dbReference>
<dbReference type="RefSeq" id="WP_003906403.1">
    <property type="nucleotide sequence ID" value="NZ_NVQJ01000033.1"/>
</dbReference>
<dbReference type="SMR" id="P9WN63"/>
<dbReference type="FunCoup" id="P9WN63">
    <property type="interactions" value="294"/>
</dbReference>
<dbReference type="STRING" id="83332.Rv0620"/>
<dbReference type="PaxDb" id="83332-Rv0620"/>
<dbReference type="DNASU" id="887936"/>
<dbReference type="GeneID" id="887936"/>
<dbReference type="KEGG" id="mtu:Rv0620"/>
<dbReference type="KEGG" id="mtv:RVBD_0620"/>
<dbReference type="TubercuList" id="Rv0620"/>
<dbReference type="eggNOG" id="COG0153">
    <property type="taxonomic scope" value="Bacteria"/>
</dbReference>
<dbReference type="InParanoid" id="P9WN63"/>
<dbReference type="OrthoDB" id="250531at2"/>
<dbReference type="PhylomeDB" id="P9WN63"/>
<dbReference type="UniPathway" id="UPA00214"/>
<dbReference type="Proteomes" id="UP000001584">
    <property type="component" value="Chromosome"/>
</dbReference>
<dbReference type="GO" id="GO:0005829">
    <property type="term" value="C:cytosol"/>
    <property type="evidence" value="ECO:0000318"/>
    <property type="project" value="GO_Central"/>
</dbReference>
<dbReference type="GO" id="GO:0005524">
    <property type="term" value="F:ATP binding"/>
    <property type="evidence" value="ECO:0007669"/>
    <property type="project" value="UniProtKB-UniRule"/>
</dbReference>
<dbReference type="GO" id="GO:0004335">
    <property type="term" value="F:galactokinase activity"/>
    <property type="evidence" value="ECO:0000318"/>
    <property type="project" value="GO_Central"/>
</dbReference>
<dbReference type="GO" id="GO:0000287">
    <property type="term" value="F:magnesium ion binding"/>
    <property type="evidence" value="ECO:0007669"/>
    <property type="project" value="UniProtKB-UniRule"/>
</dbReference>
<dbReference type="GO" id="GO:0006012">
    <property type="term" value="P:galactose metabolic process"/>
    <property type="evidence" value="ECO:0000318"/>
    <property type="project" value="GO_Central"/>
</dbReference>
<dbReference type="FunFam" id="3.30.70.890:FF:000001">
    <property type="entry name" value="Galactokinase"/>
    <property type="match status" value="1"/>
</dbReference>
<dbReference type="Gene3D" id="3.30.230.10">
    <property type="match status" value="1"/>
</dbReference>
<dbReference type="Gene3D" id="3.30.70.890">
    <property type="entry name" value="GHMP kinase, C-terminal domain"/>
    <property type="match status" value="1"/>
</dbReference>
<dbReference type="HAMAP" id="MF_00246">
    <property type="entry name" value="Galactokinase"/>
    <property type="match status" value="1"/>
</dbReference>
<dbReference type="InterPro" id="IPR000705">
    <property type="entry name" value="Galactokinase"/>
</dbReference>
<dbReference type="InterPro" id="IPR022963">
    <property type="entry name" value="Galactokinase_bac"/>
</dbReference>
<dbReference type="InterPro" id="IPR019741">
    <property type="entry name" value="Galactokinase_CS"/>
</dbReference>
<dbReference type="InterPro" id="IPR019539">
    <property type="entry name" value="GalKase_N"/>
</dbReference>
<dbReference type="InterPro" id="IPR013750">
    <property type="entry name" value="GHMP_kinase_C_dom"/>
</dbReference>
<dbReference type="InterPro" id="IPR036554">
    <property type="entry name" value="GHMP_kinase_C_sf"/>
</dbReference>
<dbReference type="InterPro" id="IPR006204">
    <property type="entry name" value="GHMP_kinase_N_dom"/>
</dbReference>
<dbReference type="InterPro" id="IPR006206">
    <property type="entry name" value="Mevalonate/galactokinase"/>
</dbReference>
<dbReference type="InterPro" id="IPR020568">
    <property type="entry name" value="Ribosomal_Su5_D2-typ_SF"/>
</dbReference>
<dbReference type="InterPro" id="IPR014721">
    <property type="entry name" value="Ribsml_uS5_D2-typ_fold_subgr"/>
</dbReference>
<dbReference type="NCBIfam" id="TIGR00131">
    <property type="entry name" value="gal_kin"/>
    <property type="match status" value="1"/>
</dbReference>
<dbReference type="NCBIfam" id="NF001816">
    <property type="entry name" value="PRK00555.1"/>
    <property type="match status" value="1"/>
</dbReference>
<dbReference type="PANTHER" id="PTHR10457:SF7">
    <property type="entry name" value="GALACTOKINASE-RELATED"/>
    <property type="match status" value="1"/>
</dbReference>
<dbReference type="PANTHER" id="PTHR10457">
    <property type="entry name" value="MEVALONATE KINASE/GALACTOKINASE"/>
    <property type="match status" value="1"/>
</dbReference>
<dbReference type="Pfam" id="PF10509">
    <property type="entry name" value="GalKase_gal_bdg"/>
    <property type="match status" value="1"/>
</dbReference>
<dbReference type="Pfam" id="PF08544">
    <property type="entry name" value="GHMP_kinases_C"/>
    <property type="match status" value="1"/>
</dbReference>
<dbReference type="Pfam" id="PF00288">
    <property type="entry name" value="GHMP_kinases_N"/>
    <property type="match status" value="1"/>
</dbReference>
<dbReference type="PIRSF" id="PIRSF000530">
    <property type="entry name" value="Galactokinase"/>
    <property type="match status" value="1"/>
</dbReference>
<dbReference type="PRINTS" id="PR00473">
    <property type="entry name" value="GALCTOKINASE"/>
</dbReference>
<dbReference type="PRINTS" id="PR00959">
    <property type="entry name" value="MEVGALKINASE"/>
</dbReference>
<dbReference type="SUPFAM" id="SSF55060">
    <property type="entry name" value="GHMP Kinase, C-terminal domain"/>
    <property type="match status" value="1"/>
</dbReference>
<dbReference type="SUPFAM" id="SSF54211">
    <property type="entry name" value="Ribosomal protein S5 domain 2-like"/>
    <property type="match status" value="1"/>
</dbReference>
<dbReference type="PROSITE" id="PS00106">
    <property type="entry name" value="GALACTOKINASE"/>
    <property type="match status" value="1"/>
</dbReference>
<accession>P9WN63</accession>
<accession>L0T4D4</accession>
<accession>P96910</accession>
<keyword id="KW-0067">ATP-binding</keyword>
<keyword id="KW-0119">Carbohydrate metabolism</keyword>
<keyword id="KW-0963">Cytoplasm</keyword>
<keyword id="KW-0299">Galactose metabolism</keyword>
<keyword id="KW-0418">Kinase</keyword>
<keyword id="KW-0460">Magnesium</keyword>
<keyword id="KW-0479">Metal-binding</keyword>
<keyword id="KW-0547">Nucleotide-binding</keyword>
<keyword id="KW-1185">Reference proteome</keyword>
<keyword id="KW-0808">Transferase</keyword>
<reference key="1">
    <citation type="journal article" date="1998" name="Nature">
        <title>Deciphering the biology of Mycobacterium tuberculosis from the complete genome sequence.</title>
        <authorList>
            <person name="Cole S.T."/>
            <person name="Brosch R."/>
            <person name="Parkhill J."/>
            <person name="Garnier T."/>
            <person name="Churcher C.M."/>
            <person name="Harris D.E."/>
            <person name="Gordon S.V."/>
            <person name="Eiglmeier K."/>
            <person name="Gas S."/>
            <person name="Barry C.E. III"/>
            <person name="Tekaia F."/>
            <person name="Badcock K."/>
            <person name="Basham D."/>
            <person name="Brown D."/>
            <person name="Chillingworth T."/>
            <person name="Connor R."/>
            <person name="Davies R.M."/>
            <person name="Devlin K."/>
            <person name="Feltwell T."/>
            <person name="Gentles S."/>
            <person name="Hamlin N."/>
            <person name="Holroyd S."/>
            <person name="Hornsby T."/>
            <person name="Jagels K."/>
            <person name="Krogh A."/>
            <person name="McLean J."/>
            <person name="Moule S."/>
            <person name="Murphy L.D."/>
            <person name="Oliver S."/>
            <person name="Osborne J."/>
            <person name="Quail M.A."/>
            <person name="Rajandream M.A."/>
            <person name="Rogers J."/>
            <person name="Rutter S."/>
            <person name="Seeger K."/>
            <person name="Skelton S."/>
            <person name="Squares S."/>
            <person name="Squares R."/>
            <person name="Sulston J.E."/>
            <person name="Taylor K."/>
            <person name="Whitehead S."/>
            <person name="Barrell B.G."/>
        </authorList>
    </citation>
    <scope>NUCLEOTIDE SEQUENCE [LARGE SCALE GENOMIC DNA]</scope>
    <source>
        <strain>ATCC 25618 / H37Rv</strain>
    </source>
</reference>
<reference key="2">
    <citation type="journal article" date="2008" name="BMC Syst. Biol.">
        <title>targetTB: a target identification pipeline for Mycobacterium tuberculosis through an interactome, reactome and genome-scale structural analysis.</title>
        <authorList>
            <person name="Raman K."/>
            <person name="Yeturu K."/>
            <person name="Chandra N."/>
        </authorList>
    </citation>
    <scope>IDENTIFICATION AS A DRUG TARGET [LARGE SCALE ANALYSIS]</scope>
</reference>
<evidence type="ECO:0000255" key="1">
    <source>
        <dbReference type="HAMAP-Rule" id="MF_00246"/>
    </source>
</evidence>
<proteinExistence type="inferred from homology"/>
<comment type="function">
    <text evidence="1">Catalyzes the transfer of the gamma-phosphate of ATP to D-galactose to form alpha-D-galactose-1-phosphate (Gal-1-P).</text>
</comment>
<comment type="catalytic activity">
    <reaction evidence="1">
        <text>alpha-D-galactose + ATP = alpha-D-galactose 1-phosphate + ADP + H(+)</text>
        <dbReference type="Rhea" id="RHEA:13553"/>
        <dbReference type="ChEBI" id="CHEBI:15378"/>
        <dbReference type="ChEBI" id="CHEBI:28061"/>
        <dbReference type="ChEBI" id="CHEBI:30616"/>
        <dbReference type="ChEBI" id="CHEBI:58336"/>
        <dbReference type="ChEBI" id="CHEBI:456216"/>
        <dbReference type="EC" id="2.7.1.6"/>
    </reaction>
</comment>
<comment type="pathway">
    <text evidence="1">Carbohydrate metabolism; galactose metabolism.</text>
</comment>
<comment type="subcellular location">
    <subcellularLocation>
        <location evidence="1">Cytoplasm</location>
    </subcellularLocation>
</comment>
<comment type="miscellaneous">
    <text>Was identified as a high-confidence drug target.</text>
</comment>
<comment type="similarity">
    <text evidence="1">Belongs to the GHMP kinase family. GalK subfamily.</text>
</comment>
<name>GAL1_MYCTU</name>
<organism>
    <name type="scientific">Mycobacterium tuberculosis (strain ATCC 25618 / H37Rv)</name>
    <dbReference type="NCBI Taxonomy" id="83332"/>
    <lineage>
        <taxon>Bacteria</taxon>
        <taxon>Bacillati</taxon>
        <taxon>Actinomycetota</taxon>
        <taxon>Actinomycetes</taxon>
        <taxon>Mycobacteriales</taxon>
        <taxon>Mycobacteriaceae</taxon>
        <taxon>Mycobacterium</taxon>
        <taxon>Mycobacterium tuberculosis complex</taxon>
    </lineage>
</organism>